<comment type="function">
    <text evidence="4">May be an activator of G protein signaling.</text>
</comment>
<comment type="subcellular location">
    <subcellularLocation>
        <location evidence="5">Secreted</location>
    </subcellularLocation>
</comment>
<comment type="induction">
    <text evidence="4">By ischemia.</text>
</comment>
<comment type="caution">
    <text evidence="5">It is uncertain whether Met-1 or Met-50 is the initiator.</text>
</comment>
<protein>
    <recommendedName>
        <fullName>Fibronectin type III domain-containing protein 1</fullName>
    </recommendedName>
    <alternativeName>
        <fullName>Activator of G-protein signaling 8</fullName>
    </alternativeName>
</protein>
<name>FNDC1_RAT</name>
<reference key="1">
    <citation type="journal article" date="2004" name="Nature">
        <title>Genome sequence of the Brown Norway rat yields insights into mammalian evolution.</title>
        <authorList>
            <person name="Gibbs R.A."/>
            <person name="Weinstock G.M."/>
            <person name="Metzker M.L."/>
            <person name="Muzny D.M."/>
            <person name="Sodergren E.J."/>
            <person name="Scherer S."/>
            <person name="Scott G."/>
            <person name="Steffen D."/>
            <person name="Worley K.C."/>
            <person name="Burch P.E."/>
            <person name="Okwuonu G."/>
            <person name="Hines S."/>
            <person name="Lewis L."/>
            <person name="Deramo C."/>
            <person name="Delgado O."/>
            <person name="Dugan-Rocha S."/>
            <person name="Miner G."/>
            <person name="Morgan M."/>
            <person name="Hawes A."/>
            <person name="Gill R."/>
            <person name="Holt R.A."/>
            <person name="Adams M.D."/>
            <person name="Amanatides P.G."/>
            <person name="Baden-Tillson H."/>
            <person name="Barnstead M."/>
            <person name="Chin S."/>
            <person name="Evans C.A."/>
            <person name="Ferriera S."/>
            <person name="Fosler C."/>
            <person name="Glodek A."/>
            <person name="Gu Z."/>
            <person name="Jennings D."/>
            <person name="Kraft C.L."/>
            <person name="Nguyen T."/>
            <person name="Pfannkoch C.M."/>
            <person name="Sitter C."/>
            <person name="Sutton G.G."/>
            <person name="Venter J.C."/>
            <person name="Woodage T."/>
            <person name="Smith D."/>
            <person name="Lee H.-M."/>
            <person name="Gustafson E."/>
            <person name="Cahill P."/>
            <person name="Kana A."/>
            <person name="Doucette-Stamm L."/>
            <person name="Weinstock K."/>
            <person name="Fechtel K."/>
            <person name="Weiss R.B."/>
            <person name="Dunn D.M."/>
            <person name="Green E.D."/>
            <person name="Blakesley R.W."/>
            <person name="Bouffard G.G."/>
            <person name="De Jong P.J."/>
            <person name="Osoegawa K."/>
            <person name="Zhu B."/>
            <person name="Marra M."/>
            <person name="Schein J."/>
            <person name="Bosdet I."/>
            <person name="Fjell C."/>
            <person name="Jones S."/>
            <person name="Krzywinski M."/>
            <person name="Mathewson C."/>
            <person name="Siddiqui A."/>
            <person name="Wye N."/>
            <person name="McPherson J."/>
            <person name="Zhao S."/>
            <person name="Fraser C.M."/>
            <person name="Shetty J."/>
            <person name="Shatsman S."/>
            <person name="Geer K."/>
            <person name="Chen Y."/>
            <person name="Abramzon S."/>
            <person name="Nierman W.C."/>
            <person name="Havlak P.H."/>
            <person name="Chen R."/>
            <person name="Durbin K.J."/>
            <person name="Egan A."/>
            <person name="Ren Y."/>
            <person name="Song X.-Z."/>
            <person name="Li B."/>
            <person name="Liu Y."/>
            <person name="Qin X."/>
            <person name="Cawley S."/>
            <person name="Cooney A.J."/>
            <person name="D'Souza L.M."/>
            <person name="Martin K."/>
            <person name="Wu J.Q."/>
            <person name="Gonzalez-Garay M.L."/>
            <person name="Jackson A.R."/>
            <person name="Kalafus K.J."/>
            <person name="McLeod M.P."/>
            <person name="Milosavljevic A."/>
            <person name="Virk D."/>
            <person name="Volkov A."/>
            <person name="Wheeler D.A."/>
            <person name="Zhang Z."/>
            <person name="Bailey J.A."/>
            <person name="Eichler E.E."/>
            <person name="Tuzun E."/>
            <person name="Birney E."/>
            <person name="Mongin E."/>
            <person name="Ureta-Vidal A."/>
            <person name="Woodwark C."/>
            <person name="Zdobnov E."/>
            <person name="Bork P."/>
            <person name="Suyama M."/>
            <person name="Torrents D."/>
            <person name="Alexandersson M."/>
            <person name="Trask B.J."/>
            <person name="Young J.M."/>
            <person name="Huang H."/>
            <person name="Wang H."/>
            <person name="Xing H."/>
            <person name="Daniels S."/>
            <person name="Gietzen D."/>
            <person name="Schmidt J."/>
            <person name="Stevens K."/>
            <person name="Vitt U."/>
            <person name="Wingrove J."/>
            <person name="Camara F."/>
            <person name="Mar Alba M."/>
            <person name="Abril J.F."/>
            <person name="Guigo R."/>
            <person name="Smit A."/>
            <person name="Dubchak I."/>
            <person name="Rubin E.M."/>
            <person name="Couronne O."/>
            <person name="Poliakov A."/>
            <person name="Huebner N."/>
            <person name="Ganten D."/>
            <person name="Goesele C."/>
            <person name="Hummel O."/>
            <person name="Kreitler T."/>
            <person name="Lee Y.-A."/>
            <person name="Monti J."/>
            <person name="Schulz H."/>
            <person name="Zimdahl H."/>
            <person name="Himmelbauer H."/>
            <person name="Lehrach H."/>
            <person name="Jacob H.J."/>
            <person name="Bromberg S."/>
            <person name="Gullings-Handley J."/>
            <person name="Jensen-Seaman M.I."/>
            <person name="Kwitek A.E."/>
            <person name="Lazar J."/>
            <person name="Pasko D."/>
            <person name="Tonellato P.J."/>
            <person name="Twigger S."/>
            <person name="Ponting C.P."/>
            <person name="Duarte J.M."/>
            <person name="Rice S."/>
            <person name="Goodstadt L."/>
            <person name="Beatson S.A."/>
            <person name="Emes R.D."/>
            <person name="Winter E.E."/>
            <person name="Webber C."/>
            <person name="Brandt P."/>
            <person name="Nyakatura G."/>
            <person name="Adetobi M."/>
            <person name="Chiaromonte F."/>
            <person name="Elnitski L."/>
            <person name="Eswara P."/>
            <person name="Hardison R.C."/>
            <person name="Hou M."/>
            <person name="Kolbe D."/>
            <person name="Makova K."/>
            <person name="Miller W."/>
            <person name="Nekrutenko A."/>
            <person name="Riemer C."/>
            <person name="Schwartz S."/>
            <person name="Taylor J."/>
            <person name="Yang S."/>
            <person name="Zhang Y."/>
            <person name="Lindpaintner K."/>
            <person name="Andrews T.D."/>
            <person name="Caccamo M."/>
            <person name="Clamp M."/>
            <person name="Clarke L."/>
            <person name="Curwen V."/>
            <person name="Durbin R.M."/>
            <person name="Eyras E."/>
            <person name="Searle S.M."/>
            <person name="Cooper G.M."/>
            <person name="Batzoglou S."/>
            <person name="Brudno M."/>
            <person name="Sidow A."/>
            <person name="Stone E.A."/>
            <person name="Payseur B.A."/>
            <person name="Bourque G."/>
            <person name="Lopez-Otin C."/>
            <person name="Puente X.S."/>
            <person name="Chakrabarti K."/>
            <person name="Chatterji S."/>
            <person name="Dewey C."/>
            <person name="Pachter L."/>
            <person name="Bray N."/>
            <person name="Yap V.B."/>
            <person name="Caspi A."/>
            <person name="Tesler G."/>
            <person name="Pevzner P.A."/>
            <person name="Haussler D."/>
            <person name="Roskin K.M."/>
            <person name="Baertsch R."/>
            <person name="Clawson H."/>
            <person name="Furey T.S."/>
            <person name="Hinrichs A.S."/>
            <person name="Karolchik D."/>
            <person name="Kent W.J."/>
            <person name="Rosenbloom K.R."/>
            <person name="Trumbower H."/>
            <person name="Weirauch M."/>
            <person name="Cooper D.N."/>
            <person name="Stenson P.D."/>
            <person name="Ma B."/>
            <person name="Brent M."/>
            <person name="Arumugam M."/>
            <person name="Shteynberg D."/>
            <person name="Copley R.R."/>
            <person name="Taylor M.S."/>
            <person name="Riethman H."/>
            <person name="Mudunuri U."/>
            <person name="Peterson J."/>
            <person name="Guyer M."/>
            <person name="Felsenfeld A."/>
            <person name="Old S."/>
            <person name="Mockrin S."/>
            <person name="Collins F.S."/>
        </authorList>
    </citation>
    <scope>NUCLEOTIDE SEQUENCE [LARGE SCALE GENOMIC DNA]</scope>
    <source>
        <strain>Brown Norway</strain>
    </source>
</reference>
<reference key="2">
    <citation type="journal article" date="2006" name="Proc. Natl. Acad. Sci. U.S.A.">
        <title>Identification of a receptor-independent activator of G protein signaling (AGS8) in ischemic heart and its interaction with Gbetagamma.</title>
        <authorList>
            <person name="Sato M."/>
            <person name="Cismowski M.J."/>
            <person name="Toyota E."/>
            <person name="Smrcka A.V."/>
            <person name="Lucchesi P.A."/>
            <person name="Chilian W.M."/>
            <person name="Lanier S.M."/>
        </authorList>
    </citation>
    <scope>NUCLEOTIDE SEQUENCE [MRNA] OF 50-1779</scope>
    <scope>FUNCTION</scope>
    <scope>INDUCTION BY ISCHEMIA</scope>
    <source>
        <strain>Wistar</strain>
        <tissue>Heart</tissue>
    </source>
</reference>
<reference key="3">
    <citation type="journal article" date="2006" name="Proc. Natl. Acad. Sci. U.S.A.">
        <title>Quantitative phosphoproteomics of vasopressin-sensitive renal cells: regulation of aquaporin-2 phosphorylation at two sites.</title>
        <authorList>
            <person name="Hoffert J.D."/>
            <person name="Pisitkun T."/>
            <person name="Wang G."/>
            <person name="Shen R.-F."/>
            <person name="Knepper M.A."/>
        </authorList>
    </citation>
    <scope>PHOSPHORYLATION [LARGE SCALE ANALYSIS] AT SER-651</scope>
    <scope>IDENTIFICATION BY MASS SPECTROMETRY [LARGE SCALE ANALYSIS]</scope>
</reference>
<reference key="4">
    <citation type="journal article" date="2012" name="Nat. Commun.">
        <title>Quantitative maps of protein phosphorylation sites across 14 different rat organs and tissues.</title>
        <authorList>
            <person name="Lundby A."/>
            <person name="Secher A."/>
            <person name="Lage K."/>
            <person name="Nordsborg N.B."/>
            <person name="Dmytriyev A."/>
            <person name="Lundby C."/>
            <person name="Olsen J.V."/>
        </authorList>
    </citation>
    <scope>PHOSPHORYLATION [LARGE SCALE ANALYSIS] AT SER-699</scope>
    <scope>IDENTIFICATION BY MASS SPECTROMETRY [LARGE SCALE ANALYSIS]</scope>
</reference>
<feature type="signal peptide" evidence="1">
    <location>
        <begin position="1"/>
        <end position="29"/>
    </location>
</feature>
<feature type="chain" id="PRO_0000284832" description="Fibronectin type III domain-containing protein 1">
    <location>
        <begin position="30"/>
        <end position="1779"/>
    </location>
</feature>
<feature type="domain" description="Fibronectin type-III 1" evidence="2">
    <location>
        <begin position="33"/>
        <end position="126"/>
    </location>
</feature>
<feature type="domain" description="Fibronectin type-III 2" evidence="2">
    <location>
        <begin position="103"/>
        <end position="203"/>
    </location>
</feature>
<feature type="domain" description="Fibronectin type-III 3" evidence="2">
    <location>
        <begin position="207"/>
        <end position="302"/>
    </location>
</feature>
<feature type="domain" description="Fibronectin type-III 4" evidence="2">
    <location>
        <begin position="307"/>
        <end position="402"/>
    </location>
</feature>
<feature type="domain" description="Fibronectin type-III 5" evidence="2">
    <location>
        <begin position="1543"/>
        <end position="1637"/>
    </location>
</feature>
<feature type="region of interest" description="Disordered" evidence="3">
    <location>
        <begin position="400"/>
        <end position="442"/>
    </location>
</feature>
<feature type="region of interest" description="Disordered" evidence="3">
    <location>
        <begin position="459"/>
        <end position="1108"/>
    </location>
</feature>
<feature type="region of interest" description="Disordered" evidence="3">
    <location>
        <begin position="1120"/>
        <end position="1227"/>
    </location>
</feature>
<feature type="region of interest" description="Disordered" evidence="3">
    <location>
        <begin position="1330"/>
        <end position="1401"/>
    </location>
</feature>
<feature type="compositionally biased region" description="Polar residues" evidence="3">
    <location>
        <begin position="400"/>
        <end position="413"/>
    </location>
</feature>
<feature type="compositionally biased region" description="Low complexity" evidence="3">
    <location>
        <begin position="423"/>
        <end position="437"/>
    </location>
</feature>
<feature type="compositionally biased region" description="Polar residues" evidence="3">
    <location>
        <begin position="493"/>
        <end position="506"/>
    </location>
</feature>
<feature type="compositionally biased region" description="Basic and acidic residues" evidence="3">
    <location>
        <begin position="534"/>
        <end position="554"/>
    </location>
</feature>
<feature type="compositionally biased region" description="Polar residues" evidence="3">
    <location>
        <begin position="557"/>
        <end position="570"/>
    </location>
</feature>
<feature type="compositionally biased region" description="Polar residues" evidence="3">
    <location>
        <begin position="590"/>
        <end position="607"/>
    </location>
</feature>
<feature type="compositionally biased region" description="Low complexity" evidence="3">
    <location>
        <begin position="629"/>
        <end position="640"/>
    </location>
</feature>
<feature type="compositionally biased region" description="Low complexity" evidence="3">
    <location>
        <begin position="676"/>
        <end position="694"/>
    </location>
</feature>
<feature type="compositionally biased region" description="Basic and acidic residues" evidence="3">
    <location>
        <begin position="707"/>
        <end position="720"/>
    </location>
</feature>
<feature type="compositionally biased region" description="Polar residues" evidence="3">
    <location>
        <begin position="763"/>
        <end position="784"/>
    </location>
</feature>
<feature type="compositionally biased region" description="Polar residues" evidence="3">
    <location>
        <begin position="861"/>
        <end position="875"/>
    </location>
</feature>
<feature type="compositionally biased region" description="Low complexity" evidence="3">
    <location>
        <begin position="879"/>
        <end position="904"/>
    </location>
</feature>
<feature type="compositionally biased region" description="Polar residues" evidence="3">
    <location>
        <begin position="957"/>
        <end position="971"/>
    </location>
</feature>
<feature type="compositionally biased region" description="Polar residues" evidence="3">
    <location>
        <begin position="1003"/>
        <end position="1020"/>
    </location>
</feature>
<feature type="compositionally biased region" description="Low complexity" evidence="3">
    <location>
        <begin position="1085"/>
        <end position="1097"/>
    </location>
</feature>
<feature type="compositionally biased region" description="Basic and acidic residues" evidence="3">
    <location>
        <begin position="1098"/>
        <end position="1108"/>
    </location>
</feature>
<feature type="compositionally biased region" description="Polar residues" evidence="3">
    <location>
        <begin position="1147"/>
        <end position="1159"/>
    </location>
</feature>
<feature type="compositionally biased region" description="Polar residues" evidence="3">
    <location>
        <begin position="1166"/>
        <end position="1177"/>
    </location>
</feature>
<feature type="compositionally biased region" description="Low complexity" evidence="3">
    <location>
        <begin position="1330"/>
        <end position="1389"/>
    </location>
</feature>
<feature type="modified residue" description="Phosphoserine" evidence="6">
    <location>
        <position position="651"/>
    </location>
</feature>
<feature type="modified residue" description="Phosphoserine" evidence="7">
    <location>
        <position position="699"/>
    </location>
</feature>
<feature type="glycosylation site" description="N-linked (GlcNAc...) asparagine" evidence="1">
    <location>
        <position position="1546"/>
    </location>
</feature>
<feature type="sequence conflict" description="In Ref. 2; ABB82299." evidence="5" ref="2">
    <original>M</original>
    <variation>T</variation>
    <location>
        <position position="439"/>
    </location>
</feature>
<feature type="sequence conflict" description="In Ref. 2; ABB82299." evidence="5" ref="2">
    <original>P</original>
    <variation>S</variation>
    <location>
        <position position="441"/>
    </location>
</feature>
<feature type="sequence conflict" description="In Ref. 2; ABB82299." evidence="5" ref="2">
    <original>N</original>
    <variation>D</variation>
    <location>
        <position position="493"/>
    </location>
</feature>
<feature type="sequence conflict" description="In Ref. 2; ABB82299." evidence="5" ref="2">
    <original>P</original>
    <variation>R</variation>
    <location>
        <position position="1016"/>
    </location>
</feature>
<feature type="sequence conflict" description="In Ref. 2; ABB82299." evidence="5" ref="2">
    <original>P</original>
    <variation>L</variation>
    <location>
        <position position="1423"/>
    </location>
</feature>
<dbReference type="EMBL" id="AABR03000391">
    <property type="status" value="NOT_ANNOTATED_CDS"/>
    <property type="molecule type" value="Genomic_DNA"/>
</dbReference>
<dbReference type="EMBL" id="AABR03002558">
    <property type="status" value="NOT_ANNOTATED_CDS"/>
    <property type="molecule type" value="Genomic_DNA"/>
</dbReference>
<dbReference type="EMBL" id="AABR03004065">
    <property type="status" value="NOT_ANNOTATED_CDS"/>
    <property type="molecule type" value="Genomic_DNA"/>
</dbReference>
<dbReference type="EMBL" id="DQ256268">
    <property type="protein sequence ID" value="ABB82299.1"/>
    <property type="molecule type" value="mRNA"/>
</dbReference>
<dbReference type="RefSeq" id="NP_001033704.2">
    <property type="nucleotide sequence ID" value="NM_001038615.2"/>
</dbReference>
<dbReference type="SMR" id="Q2Q0I9"/>
<dbReference type="DIP" id="DIP-61094N"/>
<dbReference type="FunCoup" id="Q2Q0I9">
    <property type="interactions" value="508"/>
</dbReference>
<dbReference type="IntAct" id="Q2Q0I9">
    <property type="interactions" value="2"/>
</dbReference>
<dbReference type="STRING" id="10116.ENSRNOP00000073034"/>
<dbReference type="GlyCosmos" id="Q2Q0I9">
    <property type="glycosylation" value="1 site, No reported glycans"/>
</dbReference>
<dbReference type="GlyGen" id="Q2Q0I9">
    <property type="glycosylation" value="2 sites"/>
</dbReference>
<dbReference type="iPTMnet" id="Q2Q0I9"/>
<dbReference type="PhosphoSitePlus" id="Q2Q0I9"/>
<dbReference type="PaxDb" id="10116-ENSRNOP00000029878"/>
<dbReference type="Ensembl" id="ENSRNOT00000034842.5">
    <property type="protein sequence ID" value="ENSRNOP00000029878.4"/>
    <property type="gene ID" value="ENSRNOG00000030210.5"/>
</dbReference>
<dbReference type="GeneID" id="308099"/>
<dbReference type="KEGG" id="rno:308099"/>
<dbReference type="AGR" id="RGD:1310640"/>
<dbReference type="CTD" id="84624"/>
<dbReference type="RGD" id="1310640">
    <property type="gene designation" value="Fndc1"/>
</dbReference>
<dbReference type="eggNOG" id="KOG4221">
    <property type="taxonomic scope" value="Eukaryota"/>
</dbReference>
<dbReference type="GeneTree" id="ENSGT00530000063558"/>
<dbReference type="InParanoid" id="Q2Q0I9"/>
<dbReference type="PhylomeDB" id="Q2Q0I9"/>
<dbReference type="TreeFam" id="TF337588"/>
<dbReference type="PRO" id="PR:Q2Q0I9"/>
<dbReference type="Proteomes" id="UP000002494">
    <property type="component" value="Chromosome 1"/>
</dbReference>
<dbReference type="Bgee" id="ENSRNOG00000030210">
    <property type="expression patterns" value="Expressed in esophagus and 18 other cell types or tissues"/>
</dbReference>
<dbReference type="ExpressionAtlas" id="Q2Q0I9">
    <property type="expression patterns" value="baseline and differential"/>
</dbReference>
<dbReference type="GO" id="GO:0005911">
    <property type="term" value="C:cell-cell junction"/>
    <property type="evidence" value="ECO:0000314"/>
    <property type="project" value="MGI"/>
</dbReference>
<dbReference type="GO" id="GO:0005737">
    <property type="term" value="C:cytoplasm"/>
    <property type="evidence" value="ECO:0000314"/>
    <property type="project" value="MGI"/>
</dbReference>
<dbReference type="GO" id="GO:0005576">
    <property type="term" value="C:extracellular region"/>
    <property type="evidence" value="ECO:0007669"/>
    <property type="project" value="UniProtKB-SubCell"/>
</dbReference>
<dbReference type="GO" id="GO:0031966">
    <property type="term" value="C:mitochondrial membrane"/>
    <property type="evidence" value="ECO:0000314"/>
    <property type="project" value="MGI"/>
</dbReference>
<dbReference type="GO" id="GO:0005886">
    <property type="term" value="C:plasma membrane"/>
    <property type="evidence" value="ECO:0000314"/>
    <property type="project" value="MGI"/>
</dbReference>
<dbReference type="GO" id="GO:0071456">
    <property type="term" value="P:cellular response to hypoxia"/>
    <property type="evidence" value="ECO:0000315"/>
    <property type="project" value="MGI"/>
</dbReference>
<dbReference type="GO" id="GO:0010666">
    <property type="term" value="P:positive regulation of cardiac muscle cell apoptotic process"/>
    <property type="evidence" value="ECO:0000315"/>
    <property type="project" value="MGI"/>
</dbReference>
<dbReference type="GO" id="GO:0001934">
    <property type="term" value="P:positive regulation of protein phosphorylation"/>
    <property type="evidence" value="ECO:0000314"/>
    <property type="project" value="MGI"/>
</dbReference>
<dbReference type="GO" id="GO:0051223">
    <property type="term" value="P:regulation of protein transport"/>
    <property type="evidence" value="ECO:0000314"/>
    <property type="project" value="MGI"/>
</dbReference>
<dbReference type="CDD" id="cd00063">
    <property type="entry name" value="FN3"/>
    <property type="match status" value="4"/>
</dbReference>
<dbReference type="FunFam" id="2.60.40.10:FF:000778">
    <property type="entry name" value="Fibronectin type III domain containing 1"/>
    <property type="match status" value="1"/>
</dbReference>
<dbReference type="FunFam" id="2.60.40.10:FF:001228">
    <property type="entry name" value="Fibronectin type III domain containing 1"/>
    <property type="match status" value="1"/>
</dbReference>
<dbReference type="Gene3D" id="2.60.40.10">
    <property type="entry name" value="Immunoglobulins"/>
    <property type="match status" value="5"/>
</dbReference>
<dbReference type="InterPro" id="IPR003961">
    <property type="entry name" value="FN3_dom"/>
</dbReference>
<dbReference type="InterPro" id="IPR036116">
    <property type="entry name" value="FN3_sf"/>
</dbReference>
<dbReference type="InterPro" id="IPR013783">
    <property type="entry name" value="Ig-like_fold"/>
</dbReference>
<dbReference type="InterPro" id="IPR049109">
    <property type="entry name" value="TARSH/FNDC1_C"/>
</dbReference>
<dbReference type="PANTHER" id="PTHR23197:SF8">
    <property type="entry name" value="FIBRONECTIN TYPE III DOMAIN-CONTAINING PROTEIN 1"/>
    <property type="match status" value="1"/>
</dbReference>
<dbReference type="PANTHER" id="PTHR23197">
    <property type="entry name" value="TARSH-RELATED FIBRONECTIN DOMAIN-CONTAINING"/>
    <property type="match status" value="1"/>
</dbReference>
<dbReference type="Pfam" id="PF00041">
    <property type="entry name" value="fn3"/>
    <property type="match status" value="3"/>
</dbReference>
<dbReference type="Pfam" id="PF21731">
    <property type="entry name" value="TARSH_C"/>
    <property type="match status" value="1"/>
</dbReference>
<dbReference type="SMART" id="SM00060">
    <property type="entry name" value="FN3"/>
    <property type="match status" value="3"/>
</dbReference>
<dbReference type="SUPFAM" id="SSF49265">
    <property type="entry name" value="Fibronectin type III"/>
    <property type="match status" value="4"/>
</dbReference>
<dbReference type="PROSITE" id="PS50853">
    <property type="entry name" value="FN3"/>
    <property type="match status" value="4"/>
</dbReference>
<gene>
    <name type="primary">Fndc1</name>
    <name type="synonym">Ags8</name>
</gene>
<keyword id="KW-0325">Glycoprotein</keyword>
<keyword id="KW-0597">Phosphoprotein</keyword>
<keyword id="KW-1185">Reference proteome</keyword>
<keyword id="KW-0677">Repeat</keyword>
<keyword id="KW-0964">Secreted</keyword>
<keyword id="KW-0732">Signal</keyword>
<accession>Q2Q0I9</accession>
<organism>
    <name type="scientific">Rattus norvegicus</name>
    <name type="common">Rat</name>
    <dbReference type="NCBI Taxonomy" id="10116"/>
    <lineage>
        <taxon>Eukaryota</taxon>
        <taxon>Metazoa</taxon>
        <taxon>Chordata</taxon>
        <taxon>Craniata</taxon>
        <taxon>Vertebrata</taxon>
        <taxon>Euteleostomi</taxon>
        <taxon>Mammalia</taxon>
        <taxon>Eutheria</taxon>
        <taxon>Euarchontoglires</taxon>
        <taxon>Glires</taxon>
        <taxon>Rodentia</taxon>
        <taxon>Myomorpha</taxon>
        <taxon>Muroidea</taxon>
        <taxon>Muridae</taxon>
        <taxon>Murinae</taxon>
        <taxon>Rattus</taxon>
    </lineage>
</organism>
<proteinExistence type="evidence at protein level"/>
<evidence type="ECO:0000255" key="1"/>
<evidence type="ECO:0000255" key="2">
    <source>
        <dbReference type="PROSITE-ProRule" id="PRU00316"/>
    </source>
</evidence>
<evidence type="ECO:0000256" key="3">
    <source>
        <dbReference type="SAM" id="MobiDB-lite"/>
    </source>
</evidence>
<evidence type="ECO:0000269" key="4">
    <source>
    </source>
</evidence>
<evidence type="ECO:0000305" key="5"/>
<evidence type="ECO:0007744" key="6">
    <source>
    </source>
</evidence>
<evidence type="ECO:0007744" key="7">
    <source>
    </source>
</evidence>
<sequence length="1779" mass="194049">MAPEARASPRLLLRAALLLLAALLPVASSAGPPVDHPLKPRHVKLLSANMGLKVTWDPPKDATSRPVEHYNIAYGKSLKSLKSIKVNAETHSFLIKDVEKEVPNKPLRMRVRASDDRLSVAWKAPRLSGAKSPRRSRGFLLGYGESGRKMNYVPLTRDERSHEIKKLASESVYVVSLQSTNSQGQSQPVYRAALTKRKNAEEDELDVPEDISVRVMSSQSVLVAWVDPLVEKQKRVVASRQYTVRYREKGESARWDYKQVSNRRALVDSLIPDTVYEFAVRISQGERDGKWSASVFQRTPESAPTTAPENLRVWPVNGKPTVVTVSWDALPESEGKVKEYILSYAPALKPFGAKSLTFSGHTTSALVDGLQPGERYLFKIRATNRRGQGPHSKAFIVAIPTTSSTEASVQPNGRDNGKPEKPQQPSSSAPKVAASSQHMPPAKNVKDALSDLKNKIQTNGVAPGRTQLHSKVGELDPQSTEVTGEEELDSLENPRSSRLETLNQKQPLRVPSRSGHGALAPGRTPARAGLPVLSRKEGMDRRGPSLDPHPHPRVEPSASSAYHQLSSTDNDSVDRKEDDQAGSPDPKAASSGSSPKNPGRSRPTSAPSRHAASNMLRDKSRVHPGTKAASSSTSRQSHSSTSEEDSSAQPSRHFPLHRGSSTSPLSRGWKDRQDTHASSSHTTSRTASSSHPSALTEGSEEEDGGADSDRAAEDTIRRAEATAQIQQTRPGLGHFSLIRNKPFTPHSRNPNRFPRLRGPRLQPSVSPQSTSASKVLTRSPSLPASHTRPGSDVYGDGEDEEPLPATVINDRTPSYPRHPISGSSDTLRRGPQRGASLYRKEPIPENSKAAGADVPPGGRSPLSSKAQGFQQSTTDEGAPQTSPASTSRQPSPARPPASRSQPSPGSTVPRRMTPDRSSELSSSQSKDRSLSQPKLSVAHAGHDHPHTANSRGVLPSAPQNQNEGAQSTYEDNSTEIEGPDSRTPTHSARAKDTTPPILKPRQVGSQSWSSDNRPQPSQAGASERPIRPGSTHPRAQVPGRAGVQATSVKKVSPSKRPLPLESQQSVFAEEEEENEGMLKGKEDSLSTSVKKWPSSSSPRDKYADRNLDKDKAAIGLLVQEENTVPGRRPPGSPAIASHPSTRHQPRNPATASPIANTHSWPRYTTRAPSSYSSTTPMLSLRQRMQRRFRTPVSRQPPPPRPVLTPGYNGRPNAEENIPPGSIGKPNGQRIINGPQGTKWVVDLDRGLVLNAEGRYLQDSHGNPLRVRLGGDGRTIVDLGGTPMVSPDGLPLFGQGRHGKPVASAQDKPILSLGGKPLVGLEVVRTTTQVPTTTMPPSTTTTTVPPTTTLPPTTTTTRRTTTTRRTTTTRRPTTTTRATRRTTTTTTTPEPTTPSPTCPPGTLEHRDEAGNLIMGSNGIPECYPEEDDFSGLEIDTALPTEEDYVVYDDDYGLETTRPPTSTMPSTTAATPKVVPEQGTVSSFPEEEFDLAGKRRFVAPYVTYLSKDPAAPCSLTDALDHFQVESLDELIPNDLTKNDLPPQHAPRNITVVAMEGCHSFVIVDWNKAIPGDVVTGYLVYSASYEDFIRNKWSTQTSSVTHLPIENLKPNTRYYFKVQAKNPHGYGPVSPSVSFVTESDNPLLVVRPPGGEPIWIPFAFKHDPGYTDCHGRQYVKRTWYKKFVGVVLCNSLRYKIYLSDNLKDTFYSIGDSWGRGEDHCQFVDSHLDGRTGPQSYVEALPTIQGYYRQYRQEPVSFGHIGFGTPYYYVGWYECGVSIPGKW</sequence>